<keyword id="KW-0903">Direct protein sequencing</keyword>
<keyword id="KW-1015">Disulfide bond</keyword>
<keyword id="KW-0305">Gaseous exchange</keyword>
<keyword id="KW-0325">Glycoprotein</keyword>
<keyword id="KW-1185">Reference proteome</keyword>
<keyword id="KW-0677">Repeat</keyword>
<keyword id="KW-0964">Secreted</keyword>
<keyword id="KW-0732">Signal</keyword>
<keyword id="KW-0767">Surface film</keyword>
<gene>
    <name type="primary">SFTPB</name>
    <name type="synonym">SFTP3</name>
</gene>
<sequence length="363" mass="40180">LLWLLLLPTLCGLGAADWSAPSLACARGPAFWCQSLEQALQCRALGHCLQEVWGNARADDLCQECQDIVRILTKMTKEAIFQDMVRKFLEHECDVLPLKLLTPQCHHMLGTYFPVVVDYFQSQINPKIICKHLGLCKPGLPEPEQESELSDPLLDKLILPELPGALQVTGPHTQDLSEQQLPIPLPYCWLCRTLIKRIQAMIPKGVLAVTVGQVCHVVPLVVGGICQCLGERYTVLLLDALLGRMLPQLVCGLVLRCSHEDSAGPALASLPSEWSPQESKCQLCMFVTTQAGNHSEQATPQAIRQACLSSWLDRQKCEQFVEQHMPRLQTLASGGRDAHTTCQALGACRTTFSPLQCIHIPHF</sequence>
<accession>P17129</accession>
<comment type="function">
    <text>Pulmonary surfactant-associated proteins promote alveolar stability by lowering the surface tension at the air-liquid interface in the peripheral air spaces. SP-B increases the collapse pressure of palmitic acid to nearly 70 millinewtons per meter.</text>
</comment>
<comment type="subunit">
    <text>Homodimer; disulfide-linked.</text>
</comment>
<comment type="subcellular location">
    <subcellularLocation>
        <location>Secreted</location>
        <location>Extracellular space</location>
        <location>Surface film</location>
    </subcellularLocation>
</comment>
<comment type="miscellaneous">
    <text>Pulmonary surfactant consists of 90% lipid and 10% protein. There are 4 surfactant-associated proteins: 2 collagenous, carbohydrate-binding glycoproteins (SP-A and SP-D) and 2 small hydrophobic proteins (SP-B and SP-C).</text>
</comment>
<feature type="signal peptide" evidence="1">
    <location>
        <begin position="1" status="less than"/>
        <end position="16"/>
    </location>
</feature>
<feature type="propeptide" id="PRO_0000031644">
    <location>
        <begin position="17"/>
        <end position="180"/>
    </location>
</feature>
<feature type="chain" id="PRO_0000031645" description="Pulmonary surfactant-associated protein B">
    <location>
        <begin position="181"/>
        <end position="259"/>
    </location>
</feature>
<feature type="propeptide" id="PRO_0000031646">
    <location>
        <begin position="260"/>
        <end position="363"/>
    </location>
</feature>
<feature type="domain" description="Saposin A-type" evidence="2">
    <location>
        <begin position="18"/>
        <end position="58"/>
    </location>
</feature>
<feature type="domain" description="Saposin B-type 1" evidence="3">
    <location>
        <begin position="58"/>
        <end position="140"/>
    </location>
</feature>
<feature type="domain" description="Saposin B-type 2" evidence="3">
    <location>
        <begin position="184"/>
        <end position="261"/>
    </location>
</feature>
<feature type="domain" description="Saposin B-type 3" evidence="3">
    <location>
        <begin position="277"/>
        <end position="352"/>
    </location>
</feature>
<feature type="glycosylation site" description="N-linked (GlcNAc...) asparagine" evidence="3">
    <location>
        <position position="293"/>
    </location>
</feature>
<feature type="disulfide bond" evidence="3">
    <location>
        <begin position="62"/>
        <end position="136"/>
    </location>
</feature>
<feature type="disulfide bond" evidence="3">
    <location>
        <begin position="65"/>
        <end position="130"/>
    </location>
</feature>
<feature type="disulfide bond" evidence="3">
    <location>
        <begin position="93"/>
        <end position="105"/>
    </location>
</feature>
<feature type="disulfide bond" evidence="3">
    <location>
        <begin position="188"/>
        <end position="257"/>
    </location>
</feature>
<feature type="disulfide bond" evidence="3">
    <location>
        <begin position="191"/>
        <end position="251"/>
    </location>
</feature>
<feature type="disulfide bond" evidence="3">
    <location>
        <begin position="215"/>
        <end position="226"/>
    </location>
</feature>
<feature type="disulfide bond" description="Interchain" evidence="3">
    <location>
        <position position="228"/>
    </location>
</feature>
<feature type="disulfide bond" evidence="3">
    <location>
        <begin position="281"/>
        <end position="348"/>
    </location>
</feature>
<feature type="disulfide bond" evidence="3">
    <location>
        <begin position="284"/>
        <end position="342"/>
    </location>
</feature>
<feature type="disulfide bond" evidence="3">
    <location>
        <begin position="307"/>
        <end position="317"/>
    </location>
</feature>
<feature type="non-terminal residue">
    <location>
        <position position="1"/>
    </location>
</feature>
<organism>
    <name type="scientific">Canis lupus familiaris</name>
    <name type="common">Dog</name>
    <name type="synonym">Canis familiaris</name>
    <dbReference type="NCBI Taxonomy" id="9615"/>
    <lineage>
        <taxon>Eukaryota</taxon>
        <taxon>Metazoa</taxon>
        <taxon>Chordata</taxon>
        <taxon>Craniata</taxon>
        <taxon>Vertebrata</taxon>
        <taxon>Euteleostomi</taxon>
        <taxon>Mammalia</taxon>
        <taxon>Eutheria</taxon>
        <taxon>Laurasiatheria</taxon>
        <taxon>Carnivora</taxon>
        <taxon>Caniformia</taxon>
        <taxon>Canidae</taxon>
        <taxon>Canis</taxon>
    </lineage>
</organism>
<proteinExistence type="evidence at protein level"/>
<dbReference type="EMBL" id="M15170">
    <property type="protein sequence ID" value="AAA30893.1"/>
    <property type="molecule type" value="mRNA"/>
</dbReference>
<dbReference type="PIR" id="B29072">
    <property type="entry name" value="A29072"/>
</dbReference>
<dbReference type="SMR" id="P17129"/>
<dbReference type="STRING" id="9615.ENSCAFP00000049078"/>
<dbReference type="GlyCosmos" id="P17129">
    <property type="glycosylation" value="1 site, No reported glycans"/>
</dbReference>
<dbReference type="InParanoid" id="P17129"/>
<dbReference type="OrthoDB" id="8889685at2759"/>
<dbReference type="Proteomes" id="UP000002254">
    <property type="component" value="Unplaced"/>
</dbReference>
<dbReference type="Proteomes" id="UP000694429">
    <property type="component" value="Unplaced"/>
</dbReference>
<dbReference type="Proteomes" id="UP000694542">
    <property type="component" value="Unplaced"/>
</dbReference>
<dbReference type="Proteomes" id="UP000805418">
    <property type="component" value="Unplaced"/>
</dbReference>
<dbReference type="GO" id="GO:0097208">
    <property type="term" value="C:alveolar lamellar body"/>
    <property type="evidence" value="ECO:0000318"/>
    <property type="project" value="GO_Central"/>
</dbReference>
<dbReference type="GO" id="GO:0005615">
    <property type="term" value="C:extracellular space"/>
    <property type="evidence" value="ECO:0000318"/>
    <property type="project" value="GO_Central"/>
</dbReference>
<dbReference type="GO" id="GO:0005771">
    <property type="term" value="C:multivesicular body"/>
    <property type="evidence" value="ECO:0000318"/>
    <property type="project" value="GO_Central"/>
</dbReference>
<dbReference type="GO" id="GO:0006629">
    <property type="term" value="P:lipid metabolic process"/>
    <property type="evidence" value="ECO:0007669"/>
    <property type="project" value="InterPro"/>
</dbReference>
<dbReference type="GO" id="GO:0007585">
    <property type="term" value="P:respiratory gaseous exchange by respiratory system"/>
    <property type="evidence" value="ECO:0007669"/>
    <property type="project" value="UniProtKB-KW"/>
</dbReference>
<dbReference type="FunFam" id="1.10.225.10:FF:000008">
    <property type="entry name" value="Pulmonary surfactant-associated protein B"/>
    <property type="match status" value="1"/>
</dbReference>
<dbReference type="FunFam" id="1.10.225.10:FF:000011">
    <property type="entry name" value="Pulmonary surfactant-associated protein B"/>
    <property type="match status" value="1"/>
</dbReference>
<dbReference type="Gene3D" id="1.10.225.10">
    <property type="entry name" value="Saposin-like"/>
    <property type="match status" value="2"/>
</dbReference>
<dbReference type="InterPro" id="IPR003119">
    <property type="entry name" value="SAP_A"/>
</dbReference>
<dbReference type="InterPro" id="IPR007856">
    <property type="entry name" value="SapB_1"/>
</dbReference>
<dbReference type="InterPro" id="IPR008138">
    <property type="entry name" value="SapB_2"/>
</dbReference>
<dbReference type="InterPro" id="IPR011001">
    <property type="entry name" value="Saposin-like"/>
</dbReference>
<dbReference type="InterPro" id="IPR008139">
    <property type="entry name" value="SaposinB_dom"/>
</dbReference>
<dbReference type="InterPro" id="IPR051428">
    <property type="entry name" value="Sphingo_Act-Surfact_Prot"/>
</dbReference>
<dbReference type="PANTHER" id="PTHR11480:SF33">
    <property type="entry name" value="PULMONARY SURFACTANT-ASSOCIATED PROTEIN B"/>
    <property type="match status" value="1"/>
</dbReference>
<dbReference type="PANTHER" id="PTHR11480">
    <property type="entry name" value="SAPOSIN-RELATED"/>
    <property type="match status" value="1"/>
</dbReference>
<dbReference type="Pfam" id="PF02199">
    <property type="entry name" value="SapA"/>
    <property type="match status" value="1"/>
</dbReference>
<dbReference type="Pfam" id="PF05184">
    <property type="entry name" value="SapB_1"/>
    <property type="match status" value="1"/>
</dbReference>
<dbReference type="Pfam" id="PF03489">
    <property type="entry name" value="SapB_2"/>
    <property type="match status" value="2"/>
</dbReference>
<dbReference type="SMART" id="SM00162">
    <property type="entry name" value="SAPA"/>
    <property type="match status" value="1"/>
</dbReference>
<dbReference type="SMART" id="SM00741">
    <property type="entry name" value="SapB"/>
    <property type="match status" value="3"/>
</dbReference>
<dbReference type="SUPFAM" id="SSF47862">
    <property type="entry name" value="Saposin"/>
    <property type="match status" value="3"/>
</dbReference>
<dbReference type="PROSITE" id="PS51110">
    <property type="entry name" value="SAP_A"/>
    <property type="match status" value="1"/>
</dbReference>
<dbReference type="PROSITE" id="PS50015">
    <property type="entry name" value="SAP_B"/>
    <property type="match status" value="3"/>
</dbReference>
<evidence type="ECO:0000255" key="1"/>
<evidence type="ECO:0000255" key="2">
    <source>
        <dbReference type="PROSITE-ProRule" id="PRU00414"/>
    </source>
</evidence>
<evidence type="ECO:0000255" key="3">
    <source>
        <dbReference type="PROSITE-ProRule" id="PRU00415"/>
    </source>
</evidence>
<name>PSPB_CANLF</name>
<protein>
    <recommendedName>
        <fullName>Pulmonary surfactant-associated protein B</fullName>
        <shortName>SP-B</shortName>
    </recommendedName>
    <alternativeName>
        <fullName>6 kDa protein</fullName>
    </alternativeName>
    <alternativeName>
        <fullName>Pulmonary surfactant protein 18</fullName>
        <shortName>SP 18</shortName>
    </alternativeName>
    <alternativeName>
        <fullName>Pulmonary surfactant-associated proteolipid SPL(Phe)</fullName>
    </alternativeName>
</protein>
<reference key="1">
    <citation type="journal article" date="1987" name="Proc. Natl. Acad. Sci. U.S.A.">
        <title>Nucleotide and amino acid sequences of pulmonary surfactant protein SP 18 and evidence for cooperation between SP 18 and SP 28-36 in surfactant lipid adsorption.</title>
        <authorList>
            <person name="Hawgood S."/>
            <person name="Benson B.J."/>
            <person name="Schilling J."/>
            <person name="Damm D."/>
            <person name="Clements J.A."/>
            <person name="White R.T."/>
        </authorList>
    </citation>
    <scope>NUCLEOTIDE SEQUENCE [MRNA]</scope>
    <scope>PROTEIN SEQUENCE OF 182-211</scope>
    <source>
        <tissue>Lung</tissue>
    </source>
</reference>